<feature type="initiator methionine" description="Removed" evidence="2">
    <location>
        <position position="1"/>
    </location>
</feature>
<feature type="chain" id="PRO_0000126061" description="Body wall muscle protein HR-29">
    <location>
        <begin position="2"/>
        <end position="252"/>
    </location>
</feature>
<feature type="repeat" description="1">
    <location>
        <begin position="37"/>
        <end position="55"/>
    </location>
</feature>
<feature type="repeat" description="2">
    <location>
        <begin position="56"/>
        <end position="74"/>
    </location>
</feature>
<feature type="repeat" description="3">
    <location>
        <begin position="75"/>
        <end position="93"/>
    </location>
</feature>
<feature type="domain" description="sHSP" evidence="1">
    <location>
        <begin position="138"/>
        <end position="249"/>
    </location>
</feature>
<feature type="region of interest" description="3 X 19 AA approximate tandem repeats">
    <location>
        <begin position="37"/>
        <end position="93"/>
    </location>
</feature>
<feature type="modified residue" description="N-acetylserine" evidence="2">
    <location>
        <position position="2"/>
    </location>
</feature>
<keyword id="KW-0007">Acetylation</keyword>
<keyword id="KW-0903">Direct protein sequencing</keyword>
<keyword id="KW-0472">Membrane</keyword>
<keyword id="KW-0514">Muscle protein</keyword>
<keyword id="KW-0677">Repeat</keyword>
<name>HR29_HALRO</name>
<proteinExistence type="evidence at protein level"/>
<accession>Q04757</accession>
<dbReference type="EMBL" id="D13917">
    <property type="protein sequence ID" value="BAA03012.1"/>
    <property type="molecule type" value="mRNA"/>
</dbReference>
<dbReference type="EMBL" id="D13918">
    <property type="protein sequence ID" value="BAA03013.1"/>
    <property type="molecule type" value="Genomic_DNA"/>
</dbReference>
<dbReference type="EMBL" id="S60426">
    <property type="protein sequence ID" value="AAA15484.2"/>
    <property type="molecule type" value="Genomic_DNA"/>
</dbReference>
<dbReference type="PIR" id="JX0258">
    <property type="entry name" value="JX0258"/>
</dbReference>
<dbReference type="SMR" id="Q04757"/>
<dbReference type="iPTMnet" id="Q04757"/>
<dbReference type="GO" id="GO:0005737">
    <property type="term" value="C:cytoplasm"/>
    <property type="evidence" value="ECO:0007669"/>
    <property type="project" value="TreeGrafter"/>
</dbReference>
<dbReference type="GO" id="GO:0016020">
    <property type="term" value="C:membrane"/>
    <property type="evidence" value="ECO:0007669"/>
    <property type="project" value="UniProtKB-SubCell"/>
</dbReference>
<dbReference type="GO" id="GO:0005634">
    <property type="term" value="C:nucleus"/>
    <property type="evidence" value="ECO:0007669"/>
    <property type="project" value="TreeGrafter"/>
</dbReference>
<dbReference type="GO" id="GO:0051082">
    <property type="term" value="F:unfolded protein binding"/>
    <property type="evidence" value="ECO:0007669"/>
    <property type="project" value="TreeGrafter"/>
</dbReference>
<dbReference type="GO" id="GO:0043066">
    <property type="term" value="P:negative regulation of apoptotic process"/>
    <property type="evidence" value="ECO:0007669"/>
    <property type="project" value="TreeGrafter"/>
</dbReference>
<dbReference type="GO" id="GO:0042026">
    <property type="term" value="P:protein refolding"/>
    <property type="evidence" value="ECO:0007669"/>
    <property type="project" value="TreeGrafter"/>
</dbReference>
<dbReference type="GO" id="GO:0009408">
    <property type="term" value="P:response to heat"/>
    <property type="evidence" value="ECO:0007669"/>
    <property type="project" value="TreeGrafter"/>
</dbReference>
<dbReference type="CDD" id="cd06526">
    <property type="entry name" value="metazoan_ACD"/>
    <property type="match status" value="1"/>
</dbReference>
<dbReference type="Gene3D" id="2.60.40.790">
    <property type="match status" value="1"/>
</dbReference>
<dbReference type="InterPro" id="IPR002068">
    <property type="entry name" value="A-crystallin/Hsp20_dom"/>
</dbReference>
<dbReference type="InterPro" id="IPR001436">
    <property type="entry name" value="Alpha-crystallin/sHSP_animal"/>
</dbReference>
<dbReference type="InterPro" id="IPR008978">
    <property type="entry name" value="HSP20-like_chaperone"/>
</dbReference>
<dbReference type="PANTHER" id="PTHR45640">
    <property type="entry name" value="HEAT SHOCK PROTEIN HSP-12.2-RELATED"/>
    <property type="match status" value="1"/>
</dbReference>
<dbReference type="PANTHER" id="PTHR45640:SF26">
    <property type="entry name" value="RE23625P"/>
    <property type="match status" value="1"/>
</dbReference>
<dbReference type="Pfam" id="PF00011">
    <property type="entry name" value="HSP20"/>
    <property type="match status" value="1"/>
</dbReference>
<dbReference type="PRINTS" id="PR00299">
    <property type="entry name" value="ACRYSTALLIN"/>
</dbReference>
<dbReference type="SUPFAM" id="SSF49764">
    <property type="entry name" value="HSP20-like chaperones"/>
    <property type="match status" value="1"/>
</dbReference>
<dbReference type="PROSITE" id="PS01031">
    <property type="entry name" value="SHSP"/>
    <property type="match status" value="1"/>
</dbReference>
<evidence type="ECO:0000255" key="1">
    <source>
        <dbReference type="PROSITE-ProRule" id="PRU00285"/>
    </source>
</evidence>
<evidence type="ECO:0000269" key="2">
    <source>
    </source>
</evidence>
<evidence type="ECO:0000269" key="3">
    <source ref="2"/>
</evidence>
<comment type="function">
    <text>May be a component of myofibrils where it acts as a stabilizer.</text>
</comment>
<comment type="subunit">
    <text evidence="3">Exists as an oligomer.</text>
</comment>
<comment type="subcellular location">
    <subcellularLocation>
        <location evidence="3">Membrane</location>
        <topology evidence="3">Peripheral membrane protein</topology>
    </subcellularLocation>
</comment>
<comment type="similarity">
    <text evidence="1">Belongs to the small heat shock protein (HSP20) family.</text>
</comment>
<protein>
    <recommendedName>
        <fullName>Body wall muscle protein HR-29</fullName>
    </recommendedName>
</protein>
<reference key="1">
    <citation type="journal article" date="1993" name="J. Biochem.">
        <title>Structure of 29-kDa protein from ascidian (Halocynthia roretzi) body wall muscle.</title>
        <authorList>
            <person name="Takagi T."/>
            <person name="Yasunaga H."/>
            <person name="Nakamura A."/>
        </authorList>
    </citation>
    <scope>NUCLEOTIDE SEQUENCE [GENOMIC DNA / MRNA]</scope>
    <scope>PROTEIN SEQUENCE OF 2-252</scope>
    <scope>ACETYLATION AT SER-2</scope>
    <source>
        <tissue>Body wall muscle</tissue>
    </source>
</reference>
<reference key="2">
    <citation type="journal article" date="1986" name="Comp. Biochem. Physiol.">
        <title>Isolation and characterization of a 29,000 Dalton protein from ascidian (Halocynthia roretzi) body wall muscle.</title>
        <authorList>
            <person name="Shirakata M."/>
            <person name="Takagi T."/>
            <person name="Konishi K."/>
        </authorList>
    </citation>
    <scope>SUBUNIT</scope>
    <scope>SUBCELLULAR LOCATION</scope>
</reference>
<organism>
    <name type="scientific">Halocynthia roretzi</name>
    <name type="common">Sea squirt</name>
    <name type="synonym">Cynthia roretzi</name>
    <dbReference type="NCBI Taxonomy" id="7729"/>
    <lineage>
        <taxon>Eukaryota</taxon>
        <taxon>Metazoa</taxon>
        <taxon>Chordata</taxon>
        <taxon>Tunicata</taxon>
        <taxon>Ascidiacea</taxon>
        <taxon>Stolidobranchia</taxon>
        <taxon>Pyuridae</taxon>
        <taxon>Halocynthia</taxon>
    </lineage>
</organism>
<sequence length="252" mass="28763">MSLMPFDDFYYPYQLRRRSPRWMDSTGSPWDSFATSRDWMTTPYSSTGIGRRDLSQDWMTTPYTPAGVGRRDLSQDWMTTPYTSKGIGSRNLSSWGSKSETIREMEKKFDELVRKVDRRFTGMLSMLDDPEPFARQNISVEHEGKTTSKTTKLQDFNMKVDVQDFKPEEVKVKVQGGQVLVHAKRENRDEGDGMFAYSCSEFKRAFILPEGVSAERLTSSLSRDGILQIDAPVAVAIDNKKTAVPVTVEHTK</sequence>